<organism>
    <name type="scientific">Halorhodospira halophila (strain DSM 244 / SL1)</name>
    <name type="common">Ectothiorhodospira halophila (strain DSM 244 / SL1)</name>
    <dbReference type="NCBI Taxonomy" id="349124"/>
    <lineage>
        <taxon>Bacteria</taxon>
        <taxon>Pseudomonadati</taxon>
        <taxon>Pseudomonadota</taxon>
        <taxon>Gammaproteobacteria</taxon>
        <taxon>Chromatiales</taxon>
        <taxon>Ectothiorhodospiraceae</taxon>
        <taxon>Halorhodospira</taxon>
    </lineage>
</organism>
<protein>
    <recommendedName>
        <fullName evidence="1">Undecaprenyl-diphosphatase</fullName>
        <ecNumber evidence="1">3.6.1.27</ecNumber>
    </recommendedName>
    <alternativeName>
        <fullName evidence="1">Bacitracin resistance protein</fullName>
    </alternativeName>
    <alternativeName>
        <fullName evidence="1">Undecaprenyl pyrophosphate phosphatase</fullName>
    </alternativeName>
</protein>
<comment type="function">
    <text evidence="1">Catalyzes the dephosphorylation of undecaprenyl diphosphate (UPP). Confers resistance to bacitracin.</text>
</comment>
<comment type="catalytic activity">
    <reaction evidence="1">
        <text>di-trans,octa-cis-undecaprenyl diphosphate + H2O = di-trans,octa-cis-undecaprenyl phosphate + phosphate + H(+)</text>
        <dbReference type="Rhea" id="RHEA:28094"/>
        <dbReference type="ChEBI" id="CHEBI:15377"/>
        <dbReference type="ChEBI" id="CHEBI:15378"/>
        <dbReference type="ChEBI" id="CHEBI:43474"/>
        <dbReference type="ChEBI" id="CHEBI:58405"/>
        <dbReference type="ChEBI" id="CHEBI:60392"/>
        <dbReference type="EC" id="3.6.1.27"/>
    </reaction>
</comment>
<comment type="subcellular location">
    <subcellularLocation>
        <location evidence="1">Cell inner membrane</location>
        <topology evidence="1">Multi-pass membrane protein</topology>
    </subcellularLocation>
</comment>
<comment type="miscellaneous">
    <text>Bacitracin is thought to be involved in the inhibition of peptidoglycan synthesis by sequestering undecaprenyl diphosphate, thereby reducing the pool of lipid carrier available.</text>
</comment>
<comment type="similarity">
    <text evidence="1">Belongs to the UppP family.</text>
</comment>
<evidence type="ECO:0000255" key="1">
    <source>
        <dbReference type="HAMAP-Rule" id="MF_01006"/>
    </source>
</evidence>
<sequence length="287" mass="31397">MALWIAVLLGVVQGIFMFLPVSSTAHMVLLEHWLIGRDHPMPAPESAEMILFNLVVHVGTLVSIVVVFAPSLLRFTRYSLRDAYGWARAGRFQGPPLYARLFLLGMLSVLFTGVVGLTLKATFEQVFANPWMIAFTLILTGALLFWTDKLPPRRRGLRQTGVGTATLIGVAQGFALMPGLSRSAMTIVFGLFAGLKRRWAAEYSFFLAIPTICAATLLQAIEVYQLGGLESVSVAALITGFVVAAGVGIVSLKLVIYFLYRAQLKVFSFYVWALAAAILLGWIDLPI</sequence>
<keyword id="KW-0046">Antibiotic resistance</keyword>
<keyword id="KW-0997">Cell inner membrane</keyword>
<keyword id="KW-1003">Cell membrane</keyword>
<keyword id="KW-0133">Cell shape</keyword>
<keyword id="KW-0961">Cell wall biogenesis/degradation</keyword>
<keyword id="KW-0378">Hydrolase</keyword>
<keyword id="KW-0472">Membrane</keyword>
<keyword id="KW-0573">Peptidoglycan synthesis</keyword>
<keyword id="KW-1185">Reference proteome</keyword>
<keyword id="KW-0812">Transmembrane</keyword>
<keyword id="KW-1133">Transmembrane helix</keyword>
<proteinExistence type="inferred from homology"/>
<feature type="chain" id="PRO_0000290714" description="Undecaprenyl-diphosphatase">
    <location>
        <begin position="1"/>
        <end position="287"/>
    </location>
</feature>
<feature type="transmembrane region" description="Helical" evidence="1">
    <location>
        <begin position="1"/>
        <end position="21"/>
    </location>
</feature>
<feature type="transmembrane region" description="Helical" evidence="1">
    <location>
        <begin position="49"/>
        <end position="69"/>
    </location>
</feature>
<feature type="transmembrane region" description="Helical" evidence="1">
    <location>
        <begin position="101"/>
        <end position="121"/>
    </location>
</feature>
<feature type="transmembrane region" description="Helical" evidence="1">
    <location>
        <begin position="126"/>
        <end position="146"/>
    </location>
</feature>
<feature type="transmembrane region" description="Helical" evidence="1">
    <location>
        <begin position="160"/>
        <end position="180"/>
    </location>
</feature>
<feature type="transmembrane region" description="Helical" evidence="1">
    <location>
        <begin position="203"/>
        <end position="223"/>
    </location>
</feature>
<feature type="transmembrane region" description="Helical" evidence="1">
    <location>
        <begin position="232"/>
        <end position="252"/>
    </location>
</feature>
<feature type="transmembrane region" description="Helical" evidence="1">
    <location>
        <begin position="267"/>
        <end position="287"/>
    </location>
</feature>
<gene>
    <name evidence="1" type="primary">uppP</name>
    <name type="ordered locus">Hhal_0715</name>
</gene>
<dbReference type="EC" id="3.6.1.27" evidence="1"/>
<dbReference type="EMBL" id="CP000544">
    <property type="protein sequence ID" value="ABM61497.1"/>
    <property type="molecule type" value="Genomic_DNA"/>
</dbReference>
<dbReference type="RefSeq" id="WP_011813520.1">
    <property type="nucleotide sequence ID" value="NC_008789.1"/>
</dbReference>
<dbReference type="SMR" id="A1WUY5"/>
<dbReference type="STRING" id="349124.Hhal_0715"/>
<dbReference type="KEGG" id="hha:Hhal_0715"/>
<dbReference type="eggNOG" id="COG1968">
    <property type="taxonomic scope" value="Bacteria"/>
</dbReference>
<dbReference type="HOGENOM" id="CLU_060296_1_2_6"/>
<dbReference type="OrthoDB" id="9808289at2"/>
<dbReference type="Proteomes" id="UP000000647">
    <property type="component" value="Chromosome"/>
</dbReference>
<dbReference type="GO" id="GO:0005886">
    <property type="term" value="C:plasma membrane"/>
    <property type="evidence" value="ECO:0007669"/>
    <property type="project" value="UniProtKB-SubCell"/>
</dbReference>
<dbReference type="GO" id="GO:0050380">
    <property type="term" value="F:undecaprenyl-diphosphatase activity"/>
    <property type="evidence" value="ECO:0007669"/>
    <property type="project" value="UniProtKB-UniRule"/>
</dbReference>
<dbReference type="GO" id="GO:0071555">
    <property type="term" value="P:cell wall organization"/>
    <property type="evidence" value="ECO:0007669"/>
    <property type="project" value="UniProtKB-KW"/>
</dbReference>
<dbReference type="GO" id="GO:0009252">
    <property type="term" value="P:peptidoglycan biosynthetic process"/>
    <property type="evidence" value="ECO:0007669"/>
    <property type="project" value="UniProtKB-KW"/>
</dbReference>
<dbReference type="GO" id="GO:0008360">
    <property type="term" value="P:regulation of cell shape"/>
    <property type="evidence" value="ECO:0007669"/>
    <property type="project" value="UniProtKB-KW"/>
</dbReference>
<dbReference type="GO" id="GO:0046677">
    <property type="term" value="P:response to antibiotic"/>
    <property type="evidence" value="ECO:0007669"/>
    <property type="project" value="UniProtKB-UniRule"/>
</dbReference>
<dbReference type="HAMAP" id="MF_01006">
    <property type="entry name" value="Undec_diphosphatase"/>
    <property type="match status" value="1"/>
</dbReference>
<dbReference type="InterPro" id="IPR003824">
    <property type="entry name" value="UppP"/>
</dbReference>
<dbReference type="PANTHER" id="PTHR30622">
    <property type="entry name" value="UNDECAPRENYL-DIPHOSPHATASE"/>
    <property type="match status" value="1"/>
</dbReference>
<dbReference type="PANTHER" id="PTHR30622:SF4">
    <property type="entry name" value="UNDECAPRENYL-DIPHOSPHATASE"/>
    <property type="match status" value="1"/>
</dbReference>
<dbReference type="Pfam" id="PF02673">
    <property type="entry name" value="BacA"/>
    <property type="match status" value="1"/>
</dbReference>
<name>UPPP_HALHL</name>
<accession>A1WUY5</accession>
<reference key="1">
    <citation type="submission" date="2006-12" db="EMBL/GenBank/DDBJ databases">
        <title>Complete sequence of Halorhodospira halophila SL1.</title>
        <authorList>
            <consortium name="US DOE Joint Genome Institute"/>
            <person name="Copeland A."/>
            <person name="Lucas S."/>
            <person name="Lapidus A."/>
            <person name="Barry K."/>
            <person name="Detter J.C."/>
            <person name="Glavina del Rio T."/>
            <person name="Hammon N."/>
            <person name="Israni S."/>
            <person name="Dalin E."/>
            <person name="Tice H."/>
            <person name="Pitluck S."/>
            <person name="Saunders E."/>
            <person name="Brettin T."/>
            <person name="Bruce D."/>
            <person name="Han C."/>
            <person name="Tapia R."/>
            <person name="Schmutz J."/>
            <person name="Larimer F."/>
            <person name="Land M."/>
            <person name="Hauser L."/>
            <person name="Kyrpides N."/>
            <person name="Mikhailova N."/>
            <person name="Hoff W."/>
            <person name="Richardson P."/>
        </authorList>
    </citation>
    <scope>NUCLEOTIDE SEQUENCE [LARGE SCALE GENOMIC DNA]</scope>
    <source>
        <strain>DSM 244 / SL1</strain>
    </source>
</reference>